<evidence type="ECO:0000250" key="1"/>
<evidence type="ECO:0000256" key="2">
    <source>
        <dbReference type="SAM" id="MobiDB-lite"/>
    </source>
</evidence>
<evidence type="ECO:0000305" key="3"/>
<keyword id="KW-0024">Alternative initiation</keyword>
<keyword id="KW-0143">Chaperone</keyword>
<keyword id="KW-1035">Host cytoplasm</keyword>
<keyword id="KW-0945">Host-virus interaction</keyword>
<keyword id="KW-1090">Inhibition of host innate immune response by virus</keyword>
<keyword id="KW-1114">Inhibition of host interferon signaling pathway by virus</keyword>
<keyword id="KW-1105">Inhibition of host STAT1 by virus</keyword>
<keyword id="KW-1106">Inhibition of host STAT2 by virus</keyword>
<keyword id="KW-0922">Interferon antiviral system evasion</keyword>
<keyword id="KW-0597">Phosphoprotein</keyword>
<keyword id="KW-1185">Reference proteome</keyword>
<keyword id="KW-0899">Viral immunoevasion</keyword>
<keyword id="KW-0693">Viral RNA replication</keyword>
<keyword id="KW-0946">Virion</keyword>
<accession>Q5VKP1</accession>
<name>PHOSP_WCBV</name>
<comment type="function">
    <text evidence="1">Non catalytic polymerase cofactor and regulatory protein that plays a role in viral transcription and replication. Stabilizes the RNA polymerase L to the N-RNA template and binds the soluble protein N, preventing it from encapsidating non-genomic RNA. Also inhibits host IFN-alpha and IFN-beta signaling by binding and retaining phosphorylated STAT1 in the cytoplasm or by inhibiting the DNA binding of STAT1 in the nucleus (By similarity).</text>
</comment>
<comment type="subunit">
    <text evidence="1">Homotrimer when phosphorylated. This trimer is stabilized by binding to the L protein. Binds soluble protein N, and ribonucleocapsid. Interacts with host STAT1, STAT2 and PML (By similarity).</text>
</comment>
<comment type="subcellular location">
    <molecule>Phosphoprotein</molecule>
    <subcellularLocation>
        <location>Virion</location>
    </subcellularLocation>
    <subcellularLocation>
        <location evidence="1">Host cytoplasm</location>
    </subcellularLocation>
</comment>
<comment type="subcellular location">
    <molecule>Isoform P2</molecule>
    <subcellularLocation>
        <location evidence="1">Host cytoplasm</location>
    </subcellularLocation>
</comment>
<comment type="alternative products">
    <event type="alternative initiation"/>
    <isoform>
        <id>Q5VKP1-1</id>
        <name>P</name>
        <sequence type="displayed"/>
    </isoform>
    <isoform>
        <id>Q5VKP1-2</id>
        <name>P2</name>
        <sequence type="described" ref="VSP_026921"/>
    </isoform>
</comment>
<comment type="PTM">
    <text evidence="1">Phosphorylated by host PKC and by an unknown kinase.</text>
</comment>
<comment type="similarity">
    <text evidence="3">Belongs to the lyssavirus protein P family.</text>
</comment>
<reference key="1">
    <citation type="journal article" date="2005" name="Virus Res.">
        <title>Phylogenetic relationships of Irkut and West Caucasian bat viruses within the Lyssavirus genus and suggested quantitative criteria based on the N gene sequence for lyssavirus genotype definition.</title>
        <authorList>
            <person name="Kuzmin I.V."/>
            <person name="Hughes G.J."/>
            <person name="Botvinkin A.D."/>
            <person name="Orciari L.A."/>
            <person name="Rupprecht C.E."/>
        </authorList>
    </citation>
    <scope>NUCLEOTIDE SEQUENCE [MRNA]</scope>
</reference>
<reference key="2">
    <citation type="journal article" date="2008" name="Virus Res.">
        <title>Complete genomes of Aravan, Khujand, Irkut and West Caucasian bat viruses, with special attention to the polymerase gene and non-coding regions.</title>
        <authorList>
            <person name="Kuzmin I.V."/>
            <person name="Wu X."/>
            <person name="Tordo N."/>
            <person name="Rupprecht C.E."/>
        </authorList>
    </citation>
    <scope>NUCLEOTIDE SEQUENCE [GENOMIC RNA]</scope>
</reference>
<protein>
    <recommendedName>
        <fullName>Phosphoprotein</fullName>
        <shortName>Protein P</shortName>
    </recommendedName>
    <alternativeName>
        <fullName>Protein M1</fullName>
    </alternativeName>
</protein>
<organism>
    <name type="scientific">West Caucasian bat virus</name>
    <name type="common">WCBV</name>
    <dbReference type="NCBI Taxonomy" id="249584"/>
    <lineage>
        <taxon>Viruses</taxon>
        <taxon>Riboviria</taxon>
        <taxon>Orthornavirae</taxon>
        <taxon>Negarnaviricota</taxon>
        <taxon>Haploviricotina</taxon>
        <taxon>Monjiviricetes</taxon>
        <taxon>Mononegavirales</taxon>
        <taxon>Rhabdoviridae</taxon>
        <taxon>Alpharhabdovirinae</taxon>
        <taxon>Lyssavirus</taxon>
    </lineage>
</organism>
<feature type="chain" id="PRO_0000295256" description="Phosphoprotein">
    <location>
        <begin position="1"/>
        <end position="297"/>
    </location>
</feature>
<feature type="region of interest" description="Disordered" evidence="2">
    <location>
        <begin position="57"/>
        <end position="83"/>
    </location>
</feature>
<feature type="region of interest" description="Disordered" evidence="2">
    <location>
        <begin position="153"/>
        <end position="176"/>
    </location>
</feature>
<feature type="short sequence motif" description="Nuclear export signal" evidence="1">
    <location>
        <begin position="49"/>
        <end position="58"/>
    </location>
</feature>
<feature type="short sequence motif" description="Nuclear localization signal" evidence="1">
    <location>
        <begin position="208"/>
        <end position="211"/>
    </location>
</feature>
<feature type="compositionally biased region" description="Polar residues" evidence="2">
    <location>
        <begin position="57"/>
        <end position="69"/>
    </location>
</feature>
<feature type="compositionally biased region" description="Acidic residues" evidence="2">
    <location>
        <begin position="71"/>
        <end position="83"/>
    </location>
</feature>
<feature type="modified residue" description="Phosphoserine; by host" evidence="1">
    <location>
        <position position="64"/>
    </location>
</feature>
<feature type="modified residue" description="Phosphoserine; by host PKC" evidence="1">
    <location>
        <position position="207"/>
    </location>
</feature>
<feature type="modified residue" description="Phosphoserine; by host PKC" evidence="1">
    <location>
        <position position="268"/>
    </location>
</feature>
<feature type="splice variant" id="VSP_026921" description="In isoform P2." evidence="3">
    <location>
        <begin position="1"/>
        <end position="19"/>
    </location>
</feature>
<dbReference type="EMBL" id="EF614258">
    <property type="protein sequence ID" value="AAR03482.1"/>
    <property type="molecule type" value="mRNA"/>
</dbReference>
<dbReference type="RefSeq" id="YP_009094269.1">
    <molecule id="Q5VKP1-1"/>
    <property type="nucleotide sequence ID" value="NC_025377.1"/>
</dbReference>
<dbReference type="SMR" id="Q5VKP1"/>
<dbReference type="GeneID" id="20964559"/>
<dbReference type="KEGG" id="vg:20964559"/>
<dbReference type="OrthoDB" id="6918at10239"/>
<dbReference type="Proteomes" id="UP000095862">
    <property type="component" value="Genome"/>
</dbReference>
<dbReference type="GO" id="GO:0030430">
    <property type="term" value="C:host cell cytoplasm"/>
    <property type="evidence" value="ECO:0007669"/>
    <property type="project" value="UniProtKB-SubCell"/>
</dbReference>
<dbReference type="GO" id="GO:0044423">
    <property type="term" value="C:virion component"/>
    <property type="evidence" value="ECO:0007669"/>
    <property type="project" value="UniProtKB-KW"/>
</dbReference>
<dbReference type="GO" id="GO:0003968">
    <property type="term" value="F:RNA-directed RNA polymerase activity"/>
    <property type="evidence" value="ECO:0007669"/>
    <property type="project" value="InterPro"/>
</dbReference>
<dbReference type="GO" id="GO:0052170">
    <property type="term" value="P:symbiont-mediated suppression of host innate immune response"/>
    <property type="evidence" value="ECO:0007669"/>
    <property type="project" value="UniProtKB-KW"/>
</dbReference>
<dbReference type="GO" id="GO:0039563">
    <property type="term" value="P:symbiont-mediated suppression of host JAK-STAT cascade via inhibition of STAT1 activity"/>
    <property type="evidence" value="ECO:0007669"/>
    <property type="project" value="UniProtKB-KW"/>
</dbReference>
<dbReference type="GO" id="GO:0039564">
    <property type="term" value="P:symbiont-mediated suppression of host JAK-STAT cascade via inhibition of STAT2 activity"/>
    <property type="evidence" value="ECO:0007669"/>
    <property type="project" value="UniProtKB-KW"/>
</dbReference>
<dbReference type="GO" id="GO:0039502">
    <property type="term" value="P:symbiont-mediated suppression of host type I interferon-mediated signaling pathway"/>
    <property type="evidence" value="ECO:0007669"/>
    <property type="project" value="UniProtKB-KW"/>
</dbReference>
<dbReference type="GO" id="GO:0019083">
    <property type="term" value="P:viral transcription"/>
    <property type="evidence" value="ECO:0007669"/>
    <property type="project" value="InterPro"/>
</dbReference>
<dbReference type="CDD" id="cd21032">
    <property type="entry name" value="RABV_P-protein-C_like"/>
    <property type="match status" value="1"/>
</dbReference>
<dbReference type="Gene3D" id="6.10.140.1560">
    <property type="match status" value="1"/>
</dbReference>
<dbReference type="Gene3D" id="1.20.120.820">
    <property type="entry name" value="Phosphoprotein, C-terminal domain"/>
    <property type="match status" value="1"/>
</dbReference>
<dbReference type="InterPro" id="IPR004259">
    <property type="entry name" value="PP_M1-like"/>
</dbReference>
<dbReference type="InterPro" id="IPR037199">
    <property type="entry name" value="PP_M1_C"/>
</dbReference>
<dbReference type="InterPro" id="IPR049506">
    <property type="entry name" value="RABV_P-like_C"/>
</dbReference>
<dbReference type="Pfam" id="PF03012">
    <property type="entry name" value="PP_M1"/>
    <property type="match status" value="1"/>
</dbReference>
<dbReference type="SUPFAM" id="SSF118173">
    <property type="entry name" value="Phosphoprotein M1, C-terminal domain"/>
    <property type="match status" value="1"/>
</dbReference>
<gene>
    <name type="primary">P</name>
</gene>
<organismHost>
    <name type="scientific">Miniopterus schreibersii</name>
    <name type="common">Schreibers's long-fingered bat</name>
    <name type="synonym">Vespertilio schreibersii</name>
    <dbReference type="NCBI Taxonomy" id="9433"/>
</organismHost>
<sequence length="297" mass="33522">MSKSLIHPSDLRAGLADIEMADETVDLVYKNLSEGQAHLQGEPFDIKDLPEGVSKLQISDNVRSDTSPNEYSDEDDEEGEDEYEEVYDPVSAFQDFLDETGSYLISKLKKGEKIKKTWSEVSRVIYSYVMSNFPPRPPKPTTKDIAVQADLKKPNEIQKISEHKSKSEPSPREPVVEMHKHATLENPEDDEGALESEIAHQVAESYSKKYKFPSKSSGIFLWNFEQLKMNLDDIVQVARGVPGISQIVERGGKLPLRCMLGYVGLETSKRFRSLVNQDKLCKLMQEDLNAYSVSSNN</sequence>
<proteinExistence type="evidence at transcript level"/>